<keyword id="KW-0963">Cytoplasm</keyword>
<keyword id="KW-0285">Flavoprotein</keyword>
<keyword id="KW-0288">FMN</keyword>
<keyword id="KW-1017">Isopeptide bond</keyword>
<keyword id="KW-0560">Oxidoreductase</keyword>
<keyword id="KW-0665">Pyrimidine biosynthesis</keyword>
<keyword id="KW-1185">Reference proteome</keyword>
<keyword id="KW-0832">Ubl conjugation</keyword>
<dbReference type="EC" id="1.3.98.1"/>
<dbReference type="EMBL" id="M83295">
    <property type="protein sequence ID" value="AAA34566.1"/>
    <property type="molecule type" value="Genomic_DNA"/>
</dbReference>
<dbReference type="EMBL" id="X59371">
    <property type="protein sequence ID" value="CAA42014.1"/>
    <property type="molecule type" value="Genomic_DNA"/>
</dbReference>
<dbReference type="EMBL" id="AJ585637">
    <property type="protein sequence ID" value="CAE52157.1"/>
    <property type="molecule type" value="Genomic_DNA"/>
</dbReference>
<dbReference type="EMBL" id="AJ585638">
    <property type="protein sequence ID" value="CAE52158.1"/>
    <property type="molecule type" value="Genomic_DNA"/>
</dbReference>
<dbReference type="EMBL" id="AJ585639">
    <property type="protein sequence ID" value="CAE52159.1"/>
    <property type="molecule type" value="Genomic_DNA"/>
</dbReference>
<dbReference type="EMBL" id="AJ585640">
    <property type="protein sequence ID" value="CAE52160.1"/>
    <property type="molecule type" value="Genomic_DNA"/>
</dbReference>
<dbReference type="EMBL" id="AJ585641">
    <property type="protein sequence ID" value="CAE52161.1"/>
    <property type="molecule type" value="Genomic_DNA"/>
</dbReference>
<dbReference type="EMBL" id="AJ585642">
    <property type="protein sequence ID" value="CAE52162.1"/>
    <property type="molecule type" value="Genomic_DNA"/>
</dbReference>
<dbReference type="EMBL" id="AJ585643">
    <property type="protein sequence ID" value="CAE52163.1"/>
    <property type="molecule type" value="Genomic_DNA"/>
</dbReference>
<dbReference type="EMBL" id="AJ585644">
    <property type="protein sequence ID" value="CAE52164.1"/>
    <property type="molecule type" value="Genomic_DNA"/>
</dbReference>
<dbReference type="EMBL" id="AJ585645">
    <property type="protein sequence ID" value="CAE52165.1"/>
    <property type="molecule type" value="Genomic_DNA"/>
</dbReference>
<dbReference type="EMBL" id="AJ585646">
    <property type="protein sequence ID" value="CAE52166.1"/>
    <property type="molecule type" value="Genomic_DNA"/>
</dbReference>
<dbReference type="EMBL" id="AJ585647">
    <property type="protein sequence ID" value="CAE52167.1"/>
    <property type="molecule type" value="Genomic_DNA"/>
</dbReference>
<dbReference type="EMBL" id="AJ585648">
    <property type="protein sequence ID" value="CAE52168.1"/>
    <property type="molecule type" value="Genomic_DNA"/>
</dbReference>
<dbReference type="EMBL" id="AJ585649">
    <property type="protein sequence ID" value="CAE52169.1"/>
    <property type="molecule type" value="Genomic_DNA"/>
</dbReference>
<dbReference type="EMBL" id="AJ585650">
    <property type="protein sequence ID" value="CAE52170.1"/>
    <property type="molecule type" value="Genomic_DNA"/>
</dbReference>
<dbReference type="EMBL" id="AJ585651">
    <property type="protein sequence ID" value="CAE52171.1"/>
    <property type="molecule type" value="Genomic_DNA"/>
</dbReference>
<dbReference type="EMBL" id="X75951">
    <property type="protein sequence ID" value="CAA53557.1"/>
    <property type="molecule type" value="Genomic_DNA"/>
</dbReference>
<dbReference type="EMBL" id="Z28216">
    <property type="protein sequence ID" value="CAA82061.1"/>
    <property type="molecule type" value="Genomic_DNA"/>
</dbReference>
<dbReference type="EMBL" id="BK006944">
    <property type="protein sequence ID" value="DAA08953.1"/>
    <property type="molecule type" value="Genomic_DNA"/>
</dbReference>
<dbReference type="PIR" id="JC1276">
    <property type="entry name" value="JC1276"/>
</dbReference>
<dbReference type="RefSeq" id="NP_012706.1">
    <property type="nucleotide sequence ID" value="NM_001179781.1"/>
</dbReference>
<dbReference type="SMR" id="P28272"/>
<dbReference type="BioGRID" id="33949">
    <property type="interactions" value="117"/>
</dbReference>
<dbReference type="DIP" id="DIP-6573N"/>
<dbReference type="FunCoup" id="P28272">
    <property type="interactions" value="872"/>
</dbReference>
<dbReference type="IntAct" id="P28272">
    <property type="interactions" value="8"/>
</dbReference>
<dbReference type="MINT" id="P28272"/>
<dbReference type="STRING" id="4932.YKL216W"/>
<dbReference type="BindingDB" id="P28272"/>
<dbReference type="ChEMBL" id="CHEMBL5621"/>
<dbReference type="iPTMnet" id="P28272"/>
<dbReference type="PaxDb" id="4932-YKL216W"/>
<dbReference type="PeptideAtlas" id="P28272"/>
<dbReference type="EnsemblFungi" id="YKL216W_mRNA">
    <property type="protein sequence ID" value="YKL216W"/>
    <property type="gene ID" value="YKL216W"/>
</dbReference>
<dbReference type="GeneID" id="853664"/>
<dbReference type="KEGG" id="sce:YKL216W"/>
<dbReference type="AGR" id="SGD:S000001699"/>
<dbReference type="SGD" id="S000001699">
    <property type="gene designation" value="URA1"/>
</dbReference>
<dbReference type="VEuPathDB" id="FungiDB:YKL216W"/>
<dbReference type="eggNOG" id="KOG1436">
    <property type="taxonomic scope" value="Eukaryota"/>
</dbReference>
<dbReference type="GeneTree" id="ENSGT00500000044896"/>
<dbReference type="HOGENOM" id="CLU_042042_3_0_1"/>
<dbReference type="InParanoid" id="P28272"/>
<dbReference type="OMA" id="FDFAHFD"/>
<dbReference type="OrthoDB" id="14784at2759"/>
<dbReference type="BioCyc" id="MetaCyc:YKL216W-MONOMER"/>
<dbReference type="BioCyc" id="YEAST:YKL216W-MONOMER"/>
<dbReference type="SABIO-RK" id="P28272"/>
<dbReference type="UniPathway" id="UPA00070"/>
<dbReference type="BioGRID-ORCS" id="853664">
    <property type="hits" value="6 hits in 10 CRISPR screens"/>
</dbReference>
<dbReference type="CD-CODE" id="E03F929F">
    <property type="entry name" value="Stress granule"/>
</dbReference>
<dbReference type="PRO" id="PR:P28272"/>
<dbReference type="Proteomes" id="UP000002311">
    <property type="component" value="Chromosome XI"/>
</dbReference>
<dbReference type="RNAct" id="P28272">
    <property type="molecule type" value="protein"/>
</dbReference>
<dbReference type="GO" id="GO:0005737">
    <property type="term" value="C:cytoplasm"/>
    <property type="evidence" value="ECO:0000314"/>
    <property type="project" value="SGD"/>
</dbReference>
<dbReference type="GO" id="GO:1990663">
    <property type="term" value="F:dihydroorotate dehydrogenase (fumarate) activity"/>
    <property type="evidence" value="ECO:0007669"/>
    <property type="project" value="UniProtKB-EC"/>
</dbReference>
<dbReference type="GO" id="GO:0004152">
    <property type="term" value="F:dihydroorotate dehydrogenase activity"/>
    <property type="evidence" value="ECO:0000314"/>
    <property type="project" value="SGD"/>
</dbReference>
<dbReference type="GO" id="GO:0006207">
    <property type="term" value="P:'de novo' pyrimidine nucleobase biosynthetic process"/>
    <property type="evidence" value="ECO:0000314"/>
    <property type="project" value="SGD"/>
</dbReference>
<dbReference type="GO" id="GO:0044205">
    <property type="term" value="P:'de novo' UMP biosynthetic process"/>
    <property type="evidence" value="ECO:0007669"/>
    <property type="project" value="UniProtKB-UniPathway"/>
</dbReference>
<dbReference type="CDD" id="cd04741">
    <property type="entry name" value="DHOD_1A_like"/>
    <property type="match status" value="1"/>
</dbReference>
<dbReference type="FunFam" id="3.20.20.70:FF:000027">
    <property type="entry name" value="Dihydropyrimidine dehydrogenase [NADP(+)]"/>
    <property type="match status" value="1"/>
</dbReference>
<dbReference type="Gene3D" id="3.20.20.70">
    <property type="entry name" value="Aldolase class I"/>
    <property type="match status" value="1"/>
</dbReference>
<dbReference type="Gene3D" id="2.30.26.10">
    <property type="entry name" value="Dihydroorotate Dehydrogenase A, chain A, domain 2"/>
    <property type="match status" value="1"/>
</dbReference>
<dbReference type="HAMAP" id="MF_00224">
    <property type="entry name" value="DHO_dh_type1"/>
    <property type="match status" value="1"/>
</dbReference>
<dbReference type="InterPro" id="IPR013785">
    <property type="entry name" value="Aldolase_TIM"/>
</dbReference>
<dbReference type="InterPro" id="IPR050074">
    <property type="entry name" value="DHO_dehydrogenase"/>
</dbReference>
<dbReference type="InterPro" id="IPR033886">
    <property type="entry name" value="DHOD_1A"/>
</dbReference>
<dbReference type="InterPro" id="IPR023359">
    <property type="entry name" value="Dihydro_DH_chainA_dom2"/>
</dbReference>
<dbReference type="InterPro" id="IPR024920">
    <property type="entry name" value="Dihydroorotate_DH_1"/>
</dbReference>
<dbReference type="InterPro" id="IPR012135">
    <property type="entry name" value="Dihydroorotate_DH_1_2"/>
</dbReference>
<dbReference type="InterPro" id="IPR005720">
    <property type="entry name" value="Dihydroorotate_DH_cat"/>
</dbReference>
<dbReference type="InterPro" id="IPR001295">
    <property type="entry name" value="Dihydroorotate_DH_CS"/>
</dbReference>
<dbReference type="NCBIfam" id="NF002702">
    <property type="entry name" value="PRK02506.1"/>
    <property type="match status" value="1"/>
</dbReference>
<dbReference type="PANTHER" id="PTHR48109:SF1">
    <property type="entry name" value="DIHYDROOROTATE DEHYDROGENASE (FUMARATE)"/>
    <property type="match status" value="1"/>
</dbReference>
<dbReference type="PANTHER" id="PTHR48109">
    <property type="entry name" value="DIHYDROOROTATE DEHYDROGENASE (QUINONE), MITOCHONDRIAL-RELATED"/>
    <property type="match status" value="1"/>
</dbReference>
<dbReference type="Pfam" id="PF01180">
    <property type="entry name" value="DHO_dh"/>
    <property type="match status" value="1"/>
</dbReference>
<dbReference type="PIRSF" id="PIRSF000164">
    <property type="entry name" value="DHO_oxidase"/>
    <property type="match status" value="1"/>
</dbReference>
<dbReference type="SUPFAM" id="SSF51395">
    <property type="entry name" value="FMN-linked oxidoreductases"/>
    <property type="match status" value="1"/>
</dbReference>
<dbReference type="PROSITE" id="PS00911">
    <property type="entry name" value="DHODEHASE_1"/>
    <property type="match status" value="1"/>
</dbReference>
<dbReference type="PROSITE" id="PS00912">
    <property type="entry name" value="DHODEHASE_2"/>
    <property type="match status" value="1"/>
</dbReference>
<organism>
    <name type="scientific">Saccharomyces cerevisiae (strain ATCC 204508 / S288c)</name>
    <name type="common">Baker's yeast</name>
    <dbReference type="NCBI Taxonomy" id="559292"/>
    <lineage>
        <taxon>Eukaryota</taxon>
        <taxon>Fungi</taxon>
        <taxon>Dikarya</taxon>
        <taxon>Ascomycota</taxon>
        <taxon>Saccharomycotina</taxon>
        <taxon>Saccharomycetes</taxon>
        <taxon>Saccharomycetales</taxon>
        <taxon>Saccharomycetaceae</taxon>
        <taxon>Saccharomyces</taxon>
    </lineage>
</organism>
<protein>
    <recommendedName>
        <fullName>Dihydroorotate dehydrogenase (fumarate)</fullName>
        <shortName>DHOD</shortName>
        <shortName>DHODase</shortName>
        <shortName>DHOdehase</shortName>
        <ecNumber>1.3.98.1</ecNumber>
    </recommendedName>
    <alternativeName>
        <fullName>Dihydroorotate oxidase</fullName>
    </alternativeName>
</protein>
<accession>P28272</accession>
<accession>D6VWY7</accession>
<accession>Q2XN75</accession>
<accession>Q70DC7</accession>
<evidence type="ECO:0000250" key="1"/>
<evidence type="ECO:0000269" key="2">
    <source>
    </source>
</evidence>
<evidence type="ECO:0000269" key="3">
    <source>
    </source>
</evidence>
<evidence type="ECO:0000269" key="4">
    <source>
    </source>
</evidence>
<evidence type="ECO:0000269" key="5">
    <source>
    </source>
</evidence>
<evidence type="ECO:0000269" key="6">
    <source>
    </source>
</evidence>
<evidence type="ECO:0000269" key="7">
    <source>
    </source>
</evidence>
<evidence type="ECO:0000269" key="8">
    <source>
    </source>
</evidence>
<evidence type="ECO:0000269" key="9">
    <source>
    </source>
</evidence>
<evidence type="ECO:0000305" key="10"/>
<evidence type="ECO:0007744" key="11">
    <source>
    </source>
</evidence>
<gene>
    <name type="primary">URA1</name>
    <name type="ordered locus">YKL216W</name>
</gene>
<comment type="function">
    <text evidence="2 3 5 7 8 9">Catalyzes the conversion of dihydroorotate to orotate with fumarate as the electron acceptor. Molecular oxygen can replace fumarate in vitro. Does not use oxaloacetate or NAD or NADP as electron acceptors.</text>
</comment>
<comment type="catalytic activity">
    <reaction evidence="8">
        <text>(S)-dihydroorotate + fumarate = orotate + succinate</text>
        <dbReference type="Rhea" id="RHEA:30059"/>
        <dbReference type="ChEBI" id="CHEBI:29806"/>
        <dbReference type="ChEBI" id="CHEBI:30031"/>
        <dbReference type="ChEBI" id="CHEBI:30839"/>
        <dbReference type="ChEBI" id="CHEBI:30864"/>
        <dbReference type="EC" id="1.3.98.1"/>
    </reaction>
</comment>
<comment type="cofactor">
    <cofactor evidence="2">
        <name>FMN</name>
        <dbReference type="ChEBI" id="CHEBI:58210"/>
    </cofactor>
    <text evidence="2">Binds 1 FMN per subunit.</text>
</comment>
<comment type="activity regulation">
    <text>The activity is independent of the presence of oxygen.</text>
</comment>
<comment type="biophysicochemical properties">
    <kinetics>
        <KM evidence="2 8 9">8.4 uM for (S)-dihydroorotate (at pH 7.5)</KM>
        <KM evidence="2 8 9">45 uM for fumarate (at pH 7.5)</KM>
        <KM evidence="2 8 9">115 uM for 2,6-dichloroindophenol</KM>
        <Vmax evidence="2 8 9">20.4 umol/min/mg enzyme (with 2,6-dichloroindophenol as electron acceptor)</Vmax>
        <Vmax evidence="2 8 9">5.1 umol/min/mg enzyme (with fumarate as electron acceptor)</Vmax>
    </kinetics>
    <phDependence>
        <text evidence="2 8 9">Optimum pH is 8.5. Active from pH 7 to pH 10.</text>
    </phDependence>
</comment>
<comment type="pathway">
    <text>Pyrimidine metabolism; UMP biosynthesis via de novo pathway.</text>
</comment>
<comment type="subunit">
    <text evidence="2">Homodimer.</text>
</comment>
<comment type="subcellular location">
    <subcellularLocation>
        <location evidence="3">Cytoplasm</location>
    </subcellularLocation>
</comment>
<comment type="miscellaneous">
    <text evidence="4">Present with 264000 molecules/cell in log phase SD medium.</text>
</comment>
<comment type="similarity">
    <text evidence="10">Belongs to the dihydroorotate dehydrogenase family. Type 1 subfamily.</text>
</comment>
<proteinExistence type="evidence at protein level"/>
<reference key="1">
    <citation type="journal article" date="1992" name="Gene">
        <title>Nucleotide sequence of the URA1 gene of Saccharomyces cerevisiae.</title>
        <authorList>
            <person name="Roy A."/>
        </authorList>
    </citation>
    <scope>NUCLEOTIDE SEQUENCE [GENOMIC DNA]</scope>
    <scope>FUNCTION</scope>
    <source>
        <strain>ATCC 28383 / FL100 / VTT C-80102</strain>
    </source>
</reference>
<reference key="2">
    <citation type="journal article" date="2004" name="Nucleic Acids Res.">
        <title>Differential evolution of the Saccharomyces cerevisiae DUP240 paralogs and implication of recombination in phylogeny.</title>
        <authorList>
            <person name="Leh-Louis V."/>
            <person name="Wirth B."/>
            <person name="Despons L."/>
            <person name="Wain-Hobson S."/>
            <person name="Potier S."/>
            <person name="Souciet J.-L."/>
        </authorList>
    </citation>
    <scope>NUCLEOTIDE SEQUENCE [GENOMIC DNA]</scope>
    <scope>VARIANT LYS-58</scope>
    <source>
        <strain>CLIB 219</strain>
        <strain>CLIB 382</strain>
        <strain>CLIB 388</strain>
        <strain>CLIB 410</strain>
        <strain>CLIB 413</strain>
        <strain>CLIB 556</strain>
        <strain>CLIB 630</strain>
        <strain>CLIB 95</strain>
        <strain>K1</strain>
        <strain>R12</strain>
        <strain>R13</strain>
        <strain>Sigma 1278B</strain>
        <strain>YIIc12</strain>
        <strain>YIIc17</strain>
    </source>
</reference>
<reference key="3">
    <citation type="journal article" date="1994" name="Yeast">
        <title>The complete sequencing of a 24.6 kb segment of yeast chromosome XI identified the known loci URA1, SAC1 and TRP3, and revealed 6 new open reading frames including homologues to the threonine dehydratases, membrane transporters, hydantoinases and the phospholipase A2-activating protein.</title>
        <authorList>
            <person name="Tzermia M."/>
            <person name="Horaitis O."/>
            <person name="Alexandraki D."/>
        </authorList>
    </citation>
    <scope>NUCLEOTIDE SEQUENCE [LARGE SCALE GENOMIC DNA]</scope>
    <source>
        <strain>ATCC 204508 / S288c</strain>
    </source>
</reference>
<reference key="4">
    <citation type="journal article" date="2014" name="G3 (Bethesda)">
        <title>The reference genome sequence of Saccharomyces cerevisiae: Then and now.</title>
        <authorList>
            <person name="Engel S.R."/>
            <person name="Dietrich F.S."/>
            <person name="Fisk D.G."/>
            <person name="Binkley G."/>
            <person name="Balakrishnan R."/>
            <person name="Costanzo M.C."/>
            <person name="Dwight S.S."/>
            <person name="Hitz B.C."/>
            <person name="Karra K."/>
            <person name="Nash R.S."/>
            <person name="Weng S."/>
            <person name="Wong E.D."/>
            <person name="Lloyd P."/>
            <person name="Skrzypek M.S."/>
            <person name="Miyasato S.R."/>
            <person name="Simison M."/>
            <person name="Cherry J.M."/>
        </authorList>
    </citation>
    <scope>GENOME REANNOTATION</scope>
    <source>
        <strain>ATCC 204508 / S288c</strain>
    </source>
</reference>
<reference key="5">
    <citation type="journal article" date="1994" name="Nature">
        <title>Complete DNA sequence of yeast chromosome XI.</title>
        <authorList>
            <person name="Dujon B."/>
            <person name="Alexandraki D."/>
            <person name="Andre B."/>
            <person name="Ansorge W."/>
            <person name="Baladron V."/>
            <person name="Ballesta J.P.G."/>
            <person name="Banrevi A."/>
            <person name="Bolle P.-A."/>
            <person name="Bolotin-Fukuhara M."/>
            <person name="Bossier P."/>
            <person name="Bou G."/>
            <person name="Boyer J."/>
            <person name="Buitrago M.J."/>
            <person name="Cheret G."/>
            <person name="Colleaux L."/>
            <person name="Daignan-Fornier B."/>
            <person name="del Rey F."/>
            <person name="Dion C."/>
            <person name="Domdey H."/>
            <person name="Duesterhoeft A."/>
            <person name="Duesterhus S."/>
            <person name="Entian K.-D."/>
            <person name="Erfle H."/>
            <person name="Esteban P.F."/>
            <person name="Feldmann H."/>
            <person name="Fernandes L."/>
            <person name="Fobo G.M."/>
            <person name="Fritz C."/>
            <person name="Fukuhara H."/>
            <person name="Gabel C."/>
            <person name="Gaillon L."/>
            <person name="Garcia-Cantalejo J.M."/>
            <person name="Garcia-Ramirez J.J."/>
            <person name="Gent M.E."/>
            <person name="Ghazvini M."/>
            <person name="Goffeau A."/>
            <person name="Gonzalez A."/>
            <person name="Grothues D."/>
            <person name="Guerreiro P."/>
            <person name="Hegemann J.H."/>
            <person name="Hewitt N."/>
            <person name="Hilger F."/>
            <person name="Hollenberg C.P."/>
            <person name="Horaitis O."/>
            <person name="Indge K.J."/>
            <person name="Jacquier A."/>
            <person name="James C.M."/>
            <person name="Jauniaux J.-C."/>
            <person name="Jimenez A."/>
            <person name="Keuchel H."/>
            <person name="Kirchrath L."/>
            <person name="Kleine K."/>
            <person name="Koetter P."/>
            <person name="Legrain P."/>
            <person name="Liebl S."/>
            <person name="Louis E.J."/>
            <person name="Maia e Silva A."/>
            <person name="Marck C."/>
            <person name="Monnier A.-L."/>
            <person name="Moestl D."/>
            <person name="Mueller S."/>
            <person name="Obermaier B."/>
            <person name="Oliver S.G."/>
            <person name="Pallier C."/>
            <person name="Pascolo S."/>
            <person name="Pfeiffer F."/>
            <person name="Philippsen P."/>
            <person name="Planta R.J."/>
            <person name="Pohl F.M."/>
            <person name="Pohl T.M."/>
            <person name="Poehlmann R."/>
            <person name="Portetelle D."/>
            <person name="Purnelle B."/>
            <person name="Puzos V."/>
            <person name="Ramezani Rad M."/>
            <person name="Rasmussen S.W."/>
            <person name="Remacha M.A."/>
            <person name="Revuelta J.L."/>
            <person name="Richard G.-F."/>
            <person name="Rieger M."/>
            <person name="Rodrigues-Pousada C."/>
            <person name="Rose M."/>
            <person name="Rupp T."/>
            <person name="Santos M.A."/>
            <person name="Schwager C."/>
            <person name="Sensen C."/>
            <person name="Skala J."/>
            <person name="Soares H."/>
            <person name="Sor F."/>
            <person name="Stegemann J."/>
            <person name="Tettelin H."/>
            <person name="Thierry A."/>
            <person name="Tzermia M."/>
            <person name="Urrestarazu L.A."/>
            <person name="van Dyck L."/>
            <person name="van Vliet-Reedijk J.C."/>
            <person name="Valens M."/>
            <person name="Vandenbol M."/>
            <person name="Vilela C."/>
            <person name="Vissers S."/>
            <person name="von Wettstein D."/>
            <person name="Voss H."/>
            <person name="Wiemann S."/>
            <person name="Xu G."/>
            <person name="Zimmermann J."/>
            <person name="Haasemann M."/>
            <person name="Becker I."/>
            <person name="Mewes H.-W."/>
        </authorList>
    </citation>
    <scope>NUCLEOTIDE SEQUENCE [LARGE SCALE GENOMIC DNA]</scope>
    <source>
        <strain>ATCC 204508 / S288c</strain>
    </source>
</reference>
<reference key="6">
    <citation type="journal article" date="1992" name="Proc. Natl. Acad. Sci. U.S.A.">
        <title>Divergent evolution of pyrimidine biosynthesis between anaerobic and aerobic yeasts.</title>
        <authorList>
            <person name="Nagy M."/>
            <person name="Lacroute F."/>
            <person name="Thomas D."/>
        </authorList>
    </citation>
    <scope>FUNCTION</scope>
    <scope>SUBCELLULAR LOCATION</scope>
</reference>
<reference key="7">
    <citation type="journal article" date="2000" name="Arch. Biochem. Biophys.">
        <title>Catalytic properties of dihydroorotate dehydrogenase from Saccharomyces cerevisiae: studies on pH, alternate substrates, and inhibitors.</title>
        <authorList>
            <person name="Jordan D.B."/>
            <person name="Bisaha J.J."/>
            <person name="Picollelli M.A."/>
        </authorList>
    </citation>
    <scope>FUNCTION</scope>
    <scope>SUBUNIT</scope>
    <scope>COFACTOR</scope>
    <scope>BIOPHYSICOCHEMICAL PROPERTIES</scope>
</reference>
<reference key="8">
    <citation type="journal article" date="2003" name="Nature">
        <title>Global analysis of protein expression in yeast.</title>
        <authorList>
            <person name="Ghaemmaghami S."/>
            <person name="Huh W.-K."/>
            <person name="Bower K."/>
            <person name="Howson R.W."/>
            <person name="Belle A."/>
            <person name="Dephoure N."/>
            <person name="O'Shea E.K."/>
            <person name="Weissman J.S."/>
        </authorList>
    </citation>
    <scope>LEVEL OF PROTEIN EXPRESSION [LARGE SCALE ANALYSIS]</scope>
</reference>
<reference key="9">
    <citation type="journal article" date="2004" name="FEBS Lett.">
        <title>Two different dihydroorotate dehydrogenases from yeast Saccharomyces kluyveri.</title>
        <authorList>
            <person name="Zameitat E."/>
            <person name="Knecht W."/>
            <person name="Piskur J."/>
            <person name="Loeffler M."/>
        </authorList>
    </citation>
    <scope>FUNCTION</scope>
    <scope>CATALYTIC ACTIVITY</scope>
    <scope>SUBSTRATE SPECIFICITY</scope>
    <scope>BIOPHYSICOCHEMICAL PROPERTIES</scope>
</reference>
<reference key="10">
    <citation type="journal article" date="2004" name="Mol. Genet. Genomics">
        <title>Horizontal gene transfer promoted evolution of the ability to propagate under anaerobic conditions in yeasts.</title>
        <authorList>
            <person name="Gojkovic Z."/>
            <person name="Knecht W."/>
            <person name="Zameitat E."/>
            <person name="Warneboldt J."/>
            <person name="Coutelis J.-B."/>
            <person name="Pynyaha Y."/>
            <person name="Neuveglise C."/>
            <person name="Moeller K."/>
            <person name="Loeffler M."/>
            <person name="Piskur J."/>
        </authorList>
    </citation>
    <scope>FUNCTION</scope>
</reference>
<reference key="11">
    <citation type="journal article" date="2007" name="FEMS Yeast Res.">
        <title>Dihydroorotate dehydrogenase from Saccharomyces cerevisiae: spectroscopic investigations with the recombinant enzyme throw light on catalytic properties and metabolism of fumarate analogues.</title>
        <authorList>
            <person name="Zameitat E."/>
            <person name="Pierik A.J."/>
            <person name="Zocher K."/>
            <person name="Loeffler M."/>
        </authorList>
    </citation>
    <scope>FUNCTION</scope>
    <scope>BIOPHYSICOCHEMICAL PROPERTIES</scope>
</reference>
<reference key="12">
    <citation type="journal article" date="2012" name="Proteomics">
        <title>Sites of ubiquitin attachment in Saccharomyces cerevisiae.</title>
        <authorList>
            <person name="Starita L.M."/>
            <person name="Lo R.S."/>
            <person name="Eng J.K."/>
            <person name="von Haller P.D."/>
            <person name="Fields S."/>
        </authorList>
    </citation>
    <scope>UBIQUITINATION [LARGE SCALE ANALYSIS] AT LYS-46</scope>
    <scope>IDENTIFICATION BY MASS SPECTROMETRY [LARGE SCALE ANALYSIS]</scope>
</reference>
<name>PYRD_YEAST</name>
<sequence>MTASLTTKFLNNTYENPFMNASGVHCMTTQELDELANSKAGAFITKSATTLEREGNPEPRYISVPLGSINSMGLPNEGIDYYLSYVLNRQKNYPDAPAIFFSVAGMSIDENLNLLRKIQDSEFNGITELNLSCPNVPGKPQVAYDFDLTKETLEKVFAFFKKPLGVKLPPYFDFAHFDIMAKILNEFPLAYVNSINSIGNGLFIDVEKESVVVKPKNGFGGIGGEYVKPTALANVRAFYTRLRPEIKVIGTGGIKSGKDAFEHLLCGASMLQIGTELQKEGVKIFERIEKELKDIMEAKGYTSIDQFRGKLNSI</sequence>
<feature type="chain" id="PRO_0000148506" description="Dihydroorotate dehydrogenase (fumarate)">
    <location>
        <begin position="1"/>
        <end position="314"/>
    </location>
</feature>
<feature type="active site" description="Nucleophile" evidence="1">
    <location>
        <position position="133"/>
    </location>
</feature>
<feature type="binding site" evidence="1">
    <location>
        <begin position="46"/>
        <end position="47"/>
    </location>
    <ligand>
        <name>FMN</name>
        <dbReference type="ChEBI" id="CHEBI:58210"/>
    </ligand>
</feature>
<feature type="binding site" evidence="1">
    <location>
        <position position="46"/>
    </location>
    <ligand>
        <name>substrate</name>
    </ligand>
</feature>
<feature type="binding site" evidence="1">
    <location>
        <begin position="70"/>
        <end position="74"/>
    </location>
    <ligand>
        <name>substrate</name>
    </ligand>
</feature>
<feature type="binding site" evidence="1">
    <location>
        <position position="130"/>
    </location>
    <ligand>
        <name>FMN</name>
        <dbReference type="ChEBI" id="CHEBI:58210"/>
    </ligand>
</feature>
<feature type="binding site" evidence="1">
    <location>
        <position position="130"/>
    </location>
    <ligand>
        <name>substrate</name>
    </ligand>
</feature>
<feature type="binding site" evidence="1">
    <location>
        <position position="167"/>
    </location>
    <ligand>
        <name>FMN</name>
        <dbReference type="ChEBI" id="CHEBI:58210"/>
    </ligand>
</feature>
<feature type="binding site" evidence="1">
    <location>
        <position position="195"/>
    </location>
    <ligand>
        <name>FMN</name>
        <dbReference type="ChEBI" id="CHEBI:58210"/>
    </ligand>
</feature>
<feature type="binding site" evidence="1">
    <location>
        <begin position="196"/>
        <end position="197"/>
    </location>
    <ligand>
        <name>substrate</name>
    </ligand>
</feature>
<feature type="binding site" evidence="1">
    <location>
        <position position="224"/>
    </location>
    <ligand>
        <name>FMN</name>
        <dbReference type="ChEBI" id="CHEBI:58210"/>
    </ligand>
</feature>
<feature type="binding site" evidence="1">
    <location>
        <begin position="252"/>
        <end position="253"/>
    </location>
    <ligand>
        <name>FMN</name>
        <dbReference type="ChEBI" id="CHEBI:58210"/>
    </ligand>
</feature>
<feature type="binding site" evidence="1">
    <location>
        <begin position="274"/>
        <end position="275"/>
    </location>
    <ligand>
        <name>FMN</name>
        <dbReference type="ChEBI" id="CHEBI:58210"/>
    </ligand>
</feature>
<feature type="cross-link" description="Glycyl lysine isopeptide (Lys-Gly) (interchain with G-Cter in ubiquitin)" evidence="11">
    <location>
        <position position="46"/>
    </location>
</feature>
<feature type="sequence variant" description="In strain: CLIB 95, CLIB 219, CLIB 382, CLIB 388, CLIB 413, CLIB 556, CLIB 630, K1, R12, R13, YIIc12 and YIIc17." evidence="6">
    <original>E</original>
    <variation>K</variation>
    <location>
        <position position="58"/>
    </location>
</feature>